<evidence type="ECO:0000255" key="1">
    <source>
        <dbReference type="HAMAP-Rule" id="MF_01581"/>
    </source>
</evidence>
<evidence type="ECO:0000256" key="2">
    <source>
        <dbReference type="SAM" id="MobiDB-lite"/>
    </source>
</evidence>
<dbReference type="EMBL" id="CP000720">
    <property type="protein sequence ID" value="ABS46823.1"/>
    <property type="molecule type" value="Genomic_DNA"/>
</dbReference>
<dbReference type="SMR" id="A7FHW2"/>
<dbReference type="KEGG" id="ypi:YpsIP31758_1865"/>
<dbReference type="HOGENOM" id="CLU_167574_0_0_6"/>
<dbReference type="Proteomes" id="UP000002412">
    <property type="component" value="Chromosome"/>
</dbReference>
<dbReference type="HAMAP" id="MF_01581">
    <property type="entry name" value="UPF0482"/>
    <property type="match status" value="1"/>
</dbReference>
<dbReference type="InterPro" id="IPR009700">
    <property type="entry name" value="DUF1283"/>
</dbReference>
<dbReference type="NCBIfam" id="NF010180">
    <property type="entry name" value="PRK13659.1"/>
    <property type="match status" value="1"/>
</dbReference>
<dbReference type="Pfam" id="PF06932">
    <property type="entry name" value="DUF1283"/>
    <property type="match status" value="1"/>
</dbReference>
<proteinExistence type="inferred from homology"/>
<sequence length="124" mass="14224">MMKINNLPRLIRTFLPATLLMLPLVWQTPALAQSASCTQGSTCVSVGGNNDPMSKEQARQSQQQWDETNRLRNKMNNRVEKDFDKNDRAVDAKDNCERSDNLNAYWEPNTQRCLDRLSGRKINP</sequence>
<name>Y1865_YERP3</name>
<accession>A7FHW2</accession>
<organism>
    <name type="scientific">Yersinia pseudotuberculosis serotype O:1b (strain IP 31758)</name>
    <dbReference type="NCBI Taxonomy" id="349747"/>
    <lineage>
        <taxon>Bacteria</taxon>
        <taxon>Pseudomonadati</taxon>
        <taxon>Pseudomonadota</taxon>
        <taxon>Gammaproteobacteria</taxon>
        <taxon>Enterobacterales</taxon>
        <taxon>Yersiniaceae</taxon>
        <taxon>Yersinia</taxon>
    </lineage>
</organism>
<comment type="similarity">
    <text evidence="1">Belongs to the UPF0482 family.</text>
</comment>
<keyword id="KW-0732">Signal</keyword>
<protein>
    <recommendedName>
        <fullName evidence="1">UPF0482 protein YpsIP31758_1865</fullName>
    </recommendedName>
</protein>
<reference key="1">
    <citation type="journal article" date="2007" name="PLoS Genet.">
        <title>The complete genome sequence of Yersinia pseudotuberculosis IP31758, the causative agent of Far East scarlet-like fever.</title>
        <authorList>
            <person name="Eppinger M."/>
            <person name="Rosovitz M.J."/>
            <person name="Fricke W.F."/>
            <person name="Rasko D.A."/>
            <person name="Kokorina G."/>
            <person name="Fayolle C."/>
            <person name="Lindler L.E."/>
            <person name="Carniel E."/>
            <person name="Ravel J."/>
        </authorList>
    </citation>
    <scope>NUCLEOTIDE SEQUENCE [LARGE SCALE GENOMIC DNA]</scope>
    <source>
        <strain>IP 31758</strain>
    </source>
</reference>
<gene>
    <name type="ordered locus">YpsIP31758_1865</name>
</gene>
<feature type="signal peptide" evidence="1">
    <location>
        <begin position="1"/>
        <end position="32"/>
    </location>
</feature>
<feature type="chain" id="PRO_1000069279" description="UPF0482 protein YpsIP31758_1865">
    <location>
        <begin position="33"/>
        <end position="124"/>
    </location>
</feature>
<feature type="region of interest" description="Disordered" evidence="2">
    <location>
        <begin position="47"/>
        <end position="68"/>
    </location>
</feature>